<accession>Q1GNX2</accession>
<reference key="1">
    <citation type="journal article" date="2009" name="Proc. Natl. Acad. Sci. U.S.A.">
        <title>The genomic basis of trophic strategy in marine bacteria.</title>
        <authorList>
            <person name="Lauro F.M."/>
            <person name="McDougald D."/>
            <person name="Thomas T."/>
            <person name="Williams T.J."/>
            <person name="Egan S."/>
            <person name="Rice S."/>
            <person name="DeMaere M.Z."/>
            <person name="Ting L."/>
            <person name="Ertan H."/>
            <person name="Johnson J."/>
            <person name="Ferriera S."/>
            <person name="Lapidus A."/>
            <person name="Anderson I."/>
            <person name="Kyrpides N."/>
            <person name="Munk A.C."/>
            <person name="Detter C."/>
            <person name="Han C.S."/>
            <person name="Brown M.V."/>
            <person name="Robb F.T."/>
            <person name="Kjelleberg S."/>
            <person name="Cavicchioli R."/>
        </authorList>
    </citation>
    <scope>NUCLEOTIDE SEQUENCE [LARGE SCALE GENOMIC DNA]</scope>
    <source>
        <strain>DSM 13593 / LMG 18877 / RB2256</strain>
    </source>
</reference>
<sequence>MTVTTRFAPSPTGHLHVGNVRTALHNWLWARKHGGRFLLRIDDTDVERSKEDYVAGIRADLAWLGLDIDAEERQSARFALYEAEFEKLKAAGRVYACYETPDELEVRRKILLSRGLPPVYERKPADAPVPEGVAPHWRFRLDHDAPIEWTDLIRGPQHFEPTTMSDPVVRRADGSWLYLLPSVIDDIAMGISHVVRGEDHVSNTAAQVQMFAALGASPPAFAHEALLVGTEGKLSKRLGSLGMASLREQGIEPIALAALLARLGTSDPVEPVTDLAPLVASIDFARFGRAPARFDEAELALLNQKILHHIDHAAVADRLPAAIDEARWKAIRPNLTTVAEAADWLPVFDGPFVPTATEAADRPVLRAAAKAALDIDWSADPWHALTAAVKEATGAKGRALFLPLRRALTGRDHGPDMAELLPLIAKEAAIARLTSAGGS</sequence>
<feature type="chain" id="PRO_0000367773" description="Glutamate--tRNA ligase 2">
    <location>
        <begin position="1"/>
        <end position="439"/>
    </location>
</feature>
<feature type="short sequence motif" description="'HIGH' region" evidence="1">
    <location>
        <begin position="9"/>
        <end position="19"/>
    </location>
</feature>
<feature type="short sequence motif" description="'KMSKS' region" evidence="1">
    <location>
        <begin position="233"/>
        <end position="237"/>
    </location>
</feature>
<feature type="binding site" evidence="1">
    <location>
        <position position="236"/>
    </location>
    <ligand>
        <name>ATP</name>
        <dbReference type="ChEBI" id="CHEBI:30616"/>
    </ligand>
</feature>
<comment type="function">
    <text evidence="1">Catalyzes the attachment of glutamate to tRNA(Glu) in a two-step reaction: glutamate is first activated by ATP to form Glu-AMP and then transferred to the acceptor end of tRNA(Glu).</text>
</comment>
<comment type="catalytic activity">
    <reaction evidence="1">
        <text>tRNA(Glu) + L-glutamate + ATP = L-glutamyl-tRNA(Glu) + AMP + diphosphate</text>
        <dbReference type="Rhea" id="RHEA:23540"/>
        <dbReference type="Rhea" id="RHEA-COMP:9663"/>
        <dbReference type="Rhea" id="RHEA-COMP:9680"/>
        <dbReference type="ChEBI" id="CHEBI:29985"/>
        <dbReference type="ChEBI" id="CHEBI:30616"/>
        <dbReference type="ChEBI" id="CHEBI:33019"/>
        <dbReference type="ChEBI" id="CHEBI:78442"/>
        <dbReference type="ChEBI" id="CHEBI:78520"/>
        <dbReference type="ChEBI" id="CHEBI:456215"/>
        <dbReference type="EC" id="6.1.1.17"/>
    </reaction>
</comment>
<comment type="subunit">
    <text evidence="1">Monomer.</text>
</comment>
<comment type="subcellular location">
    <subcellularLocation>
        <location evidence="1">Cytoplasm</location>
    </subcellularLocation>
</comment>
<comment type="similarity">
    <text evidence="1">Belongs to the class-I aminoacyl-tRNA synthetase family. Glutamate--tRNA ligase type 1 subfamily.</text>
</comment>
<proteinExistence type="inferred from homology"/>
<protein>
    <recommendedName>
        <fullName evidence="1">Glutamate--tRNA ligase 2</fullName>
        <ecNumber evidence="1">6.1.1.17</ecNumber>
    </recommendedName>
    <alternativeName>
        <fullName evidence="1">Glutamyl-tRNA synthetase 2</fullName>
        <shortName evidence="1">GluRS 2</shortName>
    </alternativeName>
</protein>
<dbReference type="EC" id="6.1.1.17" evidence="1"/>
<dbReference type="EMBL" id="CP000356">
    <property type="protein sequence ID" value="ABF54650.1"/>
    <property type="molecule type" value="Genomic_DNA"/>
</dbReference>
<dbReference type="RefSeq" id="WP_011543214.1">
    <property type="nucleotide sequence ID" value="NC_008048.1"/>
</dbReference>
<dbReference type="SMR" id="Q1GNX2"/>
<dbReference type="STRING" id="317655.Sala_2945"/>
<dbReference type="KEGG" id="sal:Sala_2945"/>
<dbReference type="eggNOG" id="COG0008">
    <property type="taxonomic scope" value="Bacteria"/>
</dbReference>
<dbReference type="HOGENOM" id="CLU_015768_6_1_5"/>
<dbReference type="OrthoDB" id="9807503at2"/>
<dbReference type="Proteomes" id="UP000006578">
    <property type="component" value="Chromosome"/>
</dbReference>
<dbReference type="GO" id="GO:0005737">
    <property type="term" value="C:cytoplasm"/>
    <property type="evidence" value="ECO:0007669"/>
    <property type="project" value="UniProtKB-SubCell"/>
</dbReference>
<dbReference type="GO" id="GO:0005524">
    <property type="term" value="F:ATP binding"/>
    <property type="evidence" value="ECO:0007669"/>
    <property type="project" value="UniProtKB-UniRule"/>
</dbReference>
<dbReference type="GO" id="GO:0004818">
    <property type="term" value="F:glutamate-tRNA ligase activity"/>
    <property type="evidence" value="ECO:0007669"/>
    <property type="project" value="UniProtKB-UniRule"/>
</dbReference>
<dbReference type="GO" id="GO:0000049">
    <property type="term" value="F:tRNA binding"/>
    <property type="evidence" value="ECO:0007669"/>
    <property type="project" value="InterPro"/>
</dbReference>
<dbReference type="GO" id="GO:0006424">
    <property type="term" value="P:glutamyl-tRNA aminoacylation"/>
    <property type="evidence" value="ECO:0007669"/>
    <property type="project" value="UniProtKB-UniRule"/>
</dbReference>
<dbReference type="Gene3D" id="1.10.10.350">
    <property type="match status" value="1"/>
</dbReference>
<dbReference type="Gene3D" id="3.40.50.620">
    <property type="entry name" value="HUPs"/>
    <property type="match status" value="1"/>
</dbReference>
<dbReference type="HAMAP" id="MF_00022">
    <property type="entry name" value="Glu_tRNA_synth_type1"/>
    <property type="match status" value="1"/>
</dbReference>
<dbReference type="InterPro" id="IPR045462">
    <property type="entry name" value="aa-tRNA-synth_I_cd-bd"/>
</dbReference>
<dbReference type="InterPro" id="IPR020751">
    <property type="entry name" value="aa-tRNA-synth_I_codon-bd_sub2"/>
</dbReference>
<dbReference type="InterPro" id="IPR001412">
    <property type="entry name" value="aa-tRNA-synth_I_CS"/>
</dbReference>
<dbReference type="InterPro" id="IPR008925">
    <property type="entry name" value="aa_tRNA-synth_I_cd-bd_sf"/>
</dbReference>
<dbReference type="InterPro" id="IPR004527">
    <property type="entry name" value="Glu-tRNA-ligase_bac/mito"/>
</dbReference>
<dbReference type="InterPro" id="IPR000924">
    <property type="entry name" value="Glu/Gln-tRNA-synth"/>
</dbReference>
<dbReference type="InterPro" id="IPR020058">
    <property type="entry name" value="Glu/Gln-tRNA-synth_Ib_cat-dom"/>
</dbReference>
<dbReference type="InterPro" id="IPR049940">
    <property type="entry name" value="GluQ/Sye"/>
</dbReference>
<dbReference type="InterPro" id="IPR014729">
    <property type="entry name" value="Rossmann-like_a/b/a_fold"/>
</dbReference>
<dbReference type="PANTHER" id="PTHR43311">
    <property type="entry name" value="GLUTAMATE--TRNA LIGASE"/>
    <property type="match status" value="1"/>
</dbReference>
<dbReference type="PANTHER" id="PTHR43311:SF2">
    <property type="entry name" value="GLUTAMATE--TRNA LIGASE, MITOCHONDRIAL-RELATED"/>
    <property type="match status" value="1"/>
</dbReference>
<dbReference type="Pfam" id="PF19269">
    <property type="entry name" value="Anticodon_2"/>
    <property type="match status" value="1"/>
</dbReference>
<dbReference type="Pfam" id="PF00749">
    <property type="entry name" value="tRNA-synt_1c"/>
    <property type="match status" value="1"/>
</dbReference>
<dbReference type="PRINTS" id="PR00987">
    <property type="entry name" value="TRNASYNTHGLU"/>
</dbReference>
<dbReference type="SUPFAM" id="SSF48163">
    <property type="entry name" value="An anticodon-binding domain of class I aminoacyl-tRNA synthetases"/>
    <property type="match status" value="1"/>
</dbReference>
<dbReference type="SUPFAM" id="SSF52374">
    <property type="entry name" value="Nucleotidylyl transferase"/>
    <property type="match status" value="1"/>
</dbReference>
<dbReference type="PROSITE" id="PS00178">
    <property type="entry name" value="AA_TRNA_LIGASE_I"/>
    <property type="match status" value="1"/>
</dbReference>
<keyword id="KW-0030">Aminoacyl-tRNA synthetase</keyword>
<keyword id="KW-0067">ATP-binding</keyword>
<keyword id="KW-0963">Cytoplasm</keyword>
<keyword id="KW-0436">Ligase</keyword>
<keyword id="KW-0547">Nucleotide-binding</keyword>
<keyword id="KW-0648">Protein biosynthesis</keyword>
<keyword id="KW-1185">Reference proteome</keyword>
<gene>
    <name evidence="1" type="primary">gltX2</name>
    <name type="ordered locus">Sala_2945</name>
</gene>
<organism>
    <name type="scientific">Sphingopyxis alaskensis (strain DSM 13593 / LMG 18877 / RB2256)</name>
    <name type="common">Sphingomonas alaskensis</name>
    <dbReference type="NCBI Taxonomy" id="317655"/>
    <lineage>
        <taxon>Bacteria</taxon>
        <taxon>Pseudomonadati</taxon>
        <taxon>Pseudomonadota</taxon>
        <taxon>Alphaproteobacteria</taxon>
        <taxon>Sphingomonadales</taxon>
        <taxon>Sphingomonadaceae</taxon>
        <taxon>Sphingopyxis</taxon>
    </lineage>
</organism>
<name>SYE2_SPHAL</name>
<evidence type="ECO:0000255" key="1">
    <source>
        <dbReference type="HAMAP-Rule" id="MF_00022"/>
    </source>
</evidence>